<name>RS12_PSEU2</name>
<reference key="1">
    <citation type="journal article" date="2005" name="Proc. Natl. Acad. Sci. U.S.A.">
        <title>Comparison of the complete genome sequences of Pseudomonas syringae pv. syringae B728a and pv. tomato DC3000.</title>
        <authorList>
            <person name="Feil H."/>
            <person name="Feil W.S."/>
            <person name="Chain P."/>
            <person name="Larimer F."/>
            <person name="Dibartolo G."/>
            <person name="Copeland A."/>
            <person name="Lykidis A."/>
            <person name="Trong S."/>
            <person name="Nolan M."/>
            <person name="Goltsman E."/>
            <person name="Thiel J."/>
            <person name="Malfatti S."/>
            <person name="Loper J.E."/>
            <person name="Lapidus A."/>
            <person name="Detter J.C."/>
            <person name="Land M."/>
            <person name="Richardson P.M."/>
            <person name="Kyrpides N.C."/>
            <person name="Ivanova N."/>
            <person name="Lindow S.E."/>
        </authorList>
    </citation>
    <scope>NUCLEOTIDE SEQUENCE [LARGE SCALE GENOMIC DNA]</scope>
    <source>
        <strain>B728a</strain>
    </source>
</reference>
<comment type="function">
    <text evidence="2">With S4 and S5 plays an important role in translational accuracy.</text>
</comment>
<comment type="function">
    <text evidence="2">Interacts with and stabilizes bases of the 16S rRNA that are involved in tRNA selection in the A site and with the mRNA backbone. Located at the interface of the 30S and 50S subunits, it traverses the body of the 30S subunit contacting proteins on the other side and probably holding the rRNA structure together. The combined cluster of proteins S8, S12 and S17 appears to hold together the shoulder and platform of the 30S subunit.</text>
</comment>
<comment type="subunit">
    <text evidence="2">Part of the 30S ribosomal subunit. Contacts proteins S8 and S17. May interact with IF1 in the 30S initiation complex.</text>
</comment>
<comment type="similarity">
    <text evidence="2">Belongs to the universal ribosomal protein uS12 family.</text>
</comment>
<sequence length="123" mass="13725">MATINQLVRQPRKRIVEKSDVPALQNCPQRRGVCTRVYTTTPKKPNSALRKVCRVRLTNGFEVSSYIGGEGHNLQEHSVVLIRGGRVKDLPGVRYHTVRGSLDTSGVKGRNQGRSKYGTKKPK</sequence>
<dbReference type="EMBL" id="CP000075">
    <property type="protein sequence ID" value="AAY39583.1"/>
    <property type="molecule type" value="Genomic_DNA"/>
</dbReference>
<dbReference type="RefSeq" id="WP_002555494.1">
    <property type="nucleotide sequence ID" value="NC_007005.1"/>
</dbReference>
<dbReference type="RefSeq" id="YP_237621.1">
    <property type="nucleotide sequence ID" value="NC_007005.1"/>
</dbReference>
<dbReference type="SMR" id="Q4ZMN9"/>
<dbReference type="STRING" id="205918.Psyr_4553"/>
<dbReference type="GeneID" id="97919457"/>
<dbReference type="KEGG" id="psb:Psyr_4553"/>
<dbReference type="PATRIC" id="fig|205918.7.peg.4692"/>
<dbReference type="eggNOG" id="COG0048">
    <property type="taxonomic scope" value="Bacteria"/>
</dbReference>
<dbReference type="HOGENOM" id="CLU_104295_1_2_6"/>
<dbReference type="OrthoDB" id="9802366at2"/>
<dbReference type="PRO" id="PR:Q4ZMN9"/>
<dbReference type="Proteomes" id="UP000000426">
    <property type="component" value="Chromosome"/>
</dbReference>
<dbReference type="GO" id="GO:0015935">
    <property type="term" value="C:small ribosomal subunit"/>
    <property type="evidence" value="ECO:0007669"/>
    <property type="project" value="InterPro"/>
</dbReference>
<dbReference type="GO" id="GO:0019843">
    <property type="term" value="F:rRNA binding"/>
    <property type="evidence" value="ECO:0007669"/>
    <property type="project" value="UniProtKB-UniRule"/>
</dbReference>
<dbReference type="GO" id="GO:0003735">
    <property type="term" value="F:structural constituent of ribosome"/>
    <property type="evidence" value="ECO:0007669"/>
    <property type="project" value="InterPro"/>
</dbReference>
<dbReference type="GO" id="GO:0000049">
    <property type="term" value="F:tRNA binding"/>
    <property type="evidence" value="ECO:0007669"/>
    <property type="project" value="UniProtKB-UniRule"/>
</dbReference>
<dbReference type="GO" id="GO:0006412">
    <property type="term" value="P:translation"/>
    <property type="evidence" value="ECO:0007669"/>
    <property type="project" value="UniProtKB-UniRule"/>
</dbReference>
<dbReference type="CDD" id="cd03368">
    <property type="entry name" value="Ribosomal_S12"/>
    <property type="match status" value="1"/>
</dbReference>
<dbReference type="FunFam" id="2.40.50.140:FF:000001">
    <property type="entry name" value="30S ribosomal protein S12"/>
    <property type="match status" value="1"/>
</dbReference>
<dbReference type="Gene3D" id="2.40.50.140">
    <property type="entry name" value="Nucleic acid-binding proteins"/>
    <property type="match status" value="1"/>
</dbReference>
<dbReference type="HAMAP" id="MF_00403_B">
    <property type="entry name" value="Ribosomal_uS12_B"/>
    <property type="match status" value="1"/>
</dbReference>
<dbReference type="InterPro" id="IPR012340">
    <property type="entry name" value="NA-bd_OB-fold"/>
</dbReference>
<dbReference type="InterPro" id="IPR006032">
    <property type="entry name" value="Ribosomal_uS12"/>
</dbReference>
<dbReference type="InterPro" id="IPR005679">
    <property type="entry name" value="Ribosomal_uS12_bac"/>
</dbReference>
<dbReference type="NCBIfam" id="TIGR00981">
    <property type="entry name" value="rpsL_bact"/>
    <property type="match status" value="1"/>
</dbReference>
<dbReference type="PANTHER" id="PTHR11652">
    <property type="entry name" value="30S RIBOSOMAL PROTEIN S12 FAMILY MEMBER"/>
    <property type="match status" value="1"/>
</dbReference>
<dbReference type="Pfam" id="PF00164">
    <property type="entry name" value="Ribosom_S12_S23"/>
    <property type="match status" value="1"/>
</dbReference>
<dbReference type="PIRSF" id="PIRSF002133">
    <property type="entry name" value="Ribosomal_S12/S23"/>
    <property type="match status" value="1"/>
</dbReference>
<dbReference type="PRINTS" id="PR01034">
    <property type="entry name" value="RIBOSOMALS12"/>
</dbReference>
<dbReference type="SUPFAM" id="SSF50249">
    <property type="entry name" value="Nucleic acid-binding proteins"/>
    <property type="match status" value="1"/>
</dbReference>
<dbReference type="PROSITE" id="PS00055">
    <property type="entry name" value="RIBOSOMAL_S12"/>
    <property type="match status" value="1"/>
</dbReference>
<accession>Q4ZMN9</accession>
<organism>
    <name type="scientific">Pseudomonas syringae pv. syringae (strain B728a)</name>
    <dbReference type="NCBI Taxonomy" id="205918"/>
    <lineage>
        <taxon>Bacteria</taxon>
        <taxon>Pseudomonadati</taxon>
        <taxon>Pseudomonadota</taxon>
        <taxon>Gammaproteobacteria</taxon>
        <taxon>Pseudomonadales</taxon>
        <taxon>Pseudomonadaceae</taxon>
        <taxon>Pseudomonas</taxon>
        <taxon>Pseudomonas syringae</taxon>
    </lineage>
</organism>
<keyword id="KW-0488">Methylation</keyword>
<keyword id="KW-0687">Ribonucleoprotein</keyword>
<keyword id="KW-0689">Ribosomal protein</keyword>
<keyword id="KW-0694">RNA-binding</keyword>
<keyword id="KW-0699">rRNA-binding</keyword>
<keyword id="KW-0820">tRNA-binding</keyword>
<gene>
    <name evidence="2" type="primary">rpsL</name>
    <name type="ordered locus">Psyr_4553</name>
</gene>
<protein>
    <recommendedName>
        <fullName evidence="2">Small ribosomal subunit protein uS12</fullName>
    </recommendedName>
    <alternativeName>
        <fullName evidence="4">30S ribosomal protein S12</fullName>
    </alternativeName>
</protein>
<evidence type="ECO:0000250" key="1"/>
<evidence type="ECO:0000255" key="2">
    <source>
        <dbReference type="HAMAP-Rule" id="MF_00403"/>
    </source>
</evidence>
<evidence type="ECO:0000256" key="3">
    <source>
        <dbReference type="SAM" id="MobiDB-lite"/>
    </source>
</evidence>
<evidence type="ECO:0000305" key="4"/>
<feature type="chain" id="PRO_0000226407" description="Small ribosomal subunit protein uS12">
    <location>
        <begin position="1"/>
        <end position="123"/>
    </location>
</feature>
<feature type="region of interest" description="Disordered" evidence="3">
    <location>
        <begin position="100"/>
        <end position="123"/>
    </location>
</feature>
<feature type="compositionally biased region" description="Basic residues" evidence="3">
    <location>
        <begin position="111"/>
        <end position="123"/>
    </location>
</feature>
<feature type="modified residue" description="3-methylthioaspartic acid" evidence="1">
    <location>
        <position position="89"/>
    </location>
</feature>
<proteinExistence type="inferred from homology"/>